<dbReference type="EMBL" id="AP008229">
    <property type="protein sequence ID" value="BAE69568.1"/>
    <property type="molecule type" value="Genomic_DNA"/>
</dbReference>
<dbReference type="RefSeq" id="WP_011259528.1">
    <property type="nucleotide sequence ID" value="NC_007705.1"/>
</dbReference>
<dbReference type="SMR" id="Q2P1K9"/>
<dbReference type="KEGG" id="xom:XOO2813"/>
<dbReference type="HOGENOM" id="CLU_134863_5_0_6"/>
<dbReference type="GO" id="GO:0032153">
    <property type="term" value="C:cell division site"/>
    <property type="evidence" value="ECO:0007669"/>
    <property type="project" value="UniProtKB-UniRule"/>
</dbReference>
<dbReference type="GO" id="GO:0030428">
    <property type="term" value="C:cell septum"/>
    <property type="evidence" value="ECO:0007669"/>
    <property type="project" value="TreeGrafter"/>
</dbReference>
<dbReference type="GO" id="GO:0005886">
    <property type="term" value="C:plasma membrane"/>
    <property type="evidence" value="ECO:0007669"/>
    <property type="project" value="UniProtKB-SubCell"/>
</dbReference>
<dbReference type="GO" id="GO:0043093">
    <property type="term" value="P:FtsZ-dependent cytokinesis"/>
    <property type="evidence" value="ECO:0007669"/>
    <property type="project" value="UniProtKB-UniRule"/>
</dbReference>
<dbReference type="HAMAP" id="MF_00599">
    <property type="entry name" value="FtsB"/>
    <property type="match status" value="1"/>
</dbReference>
<dbReference type="InterPro" id="IPR023081">
    <property type="entry name" value="Cell_div_FtsB"/>
</dbReference>
<dbReference type="InterPro" id="IPR007060">
    <property type="entry name" value="FtsL/DivIC"/>
</dbReference>
<dbReference type="NCBIfam" id="NF002058">
    <property type="entry name" value="PRK00888.1"/>
    <property type="match status" value="1"/>
</dbReference>
<dbReference type="PANTHER" id="PTHR37485">
    <property type="entry name" value="CELL DIVISION PROTEIN FTSB"/>
    <property type="match status" value="1"/>
</dbReference>
<dbReference type="PANTHER" id="PTHR37485:SF1">
    <property type="entry name" value="CELL DIVISION PROTEIN FTSB"/>
    <property type="match status" value="1"/>
</dbReference>
<dbReference type="Pfam" id="PF04977">
    <property type="entry name" value="DivIC"/>
    <property type="match status" value="1"/>
</dbReference>
<accession>Q2P1K9</accession>
<keyword id="KW-0131">Cell cycle</keyword>
<keyword id="KW-0132">Cell division</keyword>
<keyword id="KW-0997">Cell inner membrane</keyword>
<keyword id="KW-1003">Cell membrane</keyword>
<keyword id="KW-0175">Coiled coil</keyword>
<keyword id="KW-0472">Membrane</keyword>
<keyword id="KW-0812">Transmembrane</keyword>
<keyword id="KW-1133">Transmembrane helix</keyword>
<evidence type="ECO:0000255" key="1">
    <source>
        <dbReference type="HAMAP-Rule" id="MF_00599"/>
    </source>
</evidence>
<evidence type="ECO:0000256" key="2">
    <source>
        <dbReference type="SAM" id="MobiDB-lite"/>
    </source>
</evidence>
<sequence length="121" mass="13449">MRNWRWLLLVLAVLLAWLQYRFWFGPGNSGEVMMLEAQVAHQTQDNEGLRQRNQALAAEVKDLKDGEAAIEERARSELGMIKPGETFYRVVEDAPLPAPASPETAAPAQQAPASTDPVDHP</sequence>
<comment type="function">
    <text evidence="1">Essential cell division protein. May link together the upstream cell division proteins, which are predominantly cytoplasmic, with the downstream cell division proteins, which are predominantly periplasmic.</text>
</comment>
<comment type="subunit">
    <text evidence="1">Part of a complex composed of FtsB, FtsL and FtsQ.</text>
</comment>
<comment type="subcellular location">
    <subcellularLocation>
        <location evidence="1">Cell inner membrane</location>
        <topology evidence="1">Single-pass type II membrane protein</topology>
    </subcellularLocation>
    <text evidence="1">Localizes to the division septum.</text>
</comment>
<comment type="similarity">
    <text evidence="1">Belongs to the FtsB family.</text>
</comment>
<gene>
    <name evidence="1" type="primary">ftsB</name>
    <name type="ordered locus">XOO2813</name>
</gene>
<name>FTSB_XANOM</name>
<proteinExistence type="inferred from homology"/>
<organism>
    <name type="scientific">Xanthomonas oryzae pv. oryzae (strain MAFF 311018)</name>
    <dbReference type="NCBI Taxonomy" id="342109"/>
    <lineage>
        <taxon>Bacteria</taxon>
        <taxon>Pseudomonadati</taxon>
        <taxon>Pseudomonadota</taxon>
        <taxon>Gammaproteobacteria</taxon>
        <taxon>Lysobacterales</taxon>
        <taxon>Lysobacteraceae</taxon>
        <taxon>Xanthomonas</taxon>
    </lineage>
</organism>
<feature type="chain" id="PRO_1000025737" description="Cell division protein FtsB">
    <location>
        <begin position="1"/>
        <end position="121"/>
    </location>
</feature>
<feature type="topological domain" description="Cytoplasmic" evidence="1">
    <location>
        <begin position="1"/>
        <end position="6"/>
    </location>
</feature>
<feature type="transmembrane region" description="Helical" evidence="1">
    <location>
        <begin position="7"/>
        <end position="24"/>
    </location>
</feature>
<feature type="topological domain" description="Periplasmic" evidence="1">
    <location>
        <begin position="25"/>
        <end position="121"/>
    </location>
</feature>
<feature type="region of interest" description="Disordered" evidence="2">
    <location>
        <begin position="94"/>
        <end position="121"/>
    </location>
</feature>
<feature type="coiled-coil region" evidence="1">
    <location>
        <begin position="31"/>
        <end position="66"/>
    </location>
</feature>
<feature type="compositionally biased region" description="Low complexity" evidence="2">
    <location>
        <begin position="101"/>
        <end position="121"/>
    </location>
</feature>
<reference key="1">
    <citation type="journal article" date="2005" name="Jpn. Agric. Res. Q.">
        <title>Genome sequence of Xanthomonas oryzae pv. oryzae suggests contribution of large numbers of effector genes and insertion sequences to its race diversity.</title>
        <authorList>
            <person name="Ochiai H."/>
            <person name="Inoue Y."/>
            <person name="Takeya M."/>
            <person name="Sasaki A."/>
            <person name="Kaku H."/>
        </authorList>
    </citation>
    <scope>NUCLEOTIDE SEQUENCE [LARGE SCALE GENOMIC DNA]</scope>
    <source>
        <strain>MAFF 311018</strain>
    </source>
</reference>
<protein>
    <recommendedName>
        <fullName evidence="1">Cell division protein FtsB</fullName>
    </recommendedName>
</protein>